<comment type="subcellular location">
    <subcellularLocation>
        <location evidence="1">Cytoplasm</location>
    </subcellularLocation>
</comment>
<comment type="similarity">
    <text evidence="1">Belongs to the TACO1 family.</text>
</comment>
<protein>
    <recommendedName>
        <fullName evidence="1">Probable transcriptional regulatory protein plu2109</fullName>
    </recommendedName>
</protein>
<accession>Q7N550</accession>
<name>Y2109_PHOLL</name>
<proteinExistence type="inferred from homology"/>
<dbReference type="EMBL" id="BX571866">
    <property type="protein sequence ID" value="CAE14402.1"/>
    <property type="molecule type" value="Genomic_DNA"/>
</dbReference>
<dbReference type="RefSeq" id="WP_011146363.1">
    <property type="nucleotide sequence ID" value="NC_005126.1"/>
</dbReference>
<dbReference type="SMR" id="Q7N550"/>
<dbReference type="STRING" id="243265.plu2109"/>
<dbReference type="GeneID" id="48848388"/>
<dbReference type="KEGG" id="plu:plu2109"/>
<dbReference type="eggNOG" id="COG0217">
    <property type="taxonomic scope" value="Bacteria"/>
</dbReference>
<dbReference type="HOGENOM" id="CLU_062974_2_2_6"/>
<dbReference type="OrthoDB" id="9781053at2"/>
<dbReference type="Proteomes" id="UP000002514">
    <property type="component" value="Chromosome"/>
</dbReference>
<dbReference type="GO" id="GO:0005829">
    <property type="term" value="C:cytosol"/>
    <property type="evidence" value="ECO:0007669"/>
    <property type="project" value="TreeGrafter"/>
</dbReference>
<dbReference type="GO" id="GO:0003677">
    <property type="term" value="F:DNA binding"/>
    <property type="evidence" value="ECO:0007669"/>
    <property type="project" value="UniProtKB-UniRule"/>
</dbReference>
<dbReference type="GO" id="GO:0006355">
    <property type="term" value="P:regulation of DNA-templated transcription"/>
    <property type="evidence" value="ECO:0007669"/>
    <property type="project" value="UniProtKB-UniRule"/>
</dbReference>
<dbReference type="FunFam" id="1.10.10.200:FF:000001">
    <property type="entry name" value="Probable transcriptional regulatory protein YebC"/>
    <property type="match status" value="1"/>
</dbReference>
<dbReference type="FunFam" id="3.30.70.980:FF:000002">
    <property type="entry name" value="Probable transcriptional regulatory protein YebC"/>
    <property type="match status" value="1"/>
</dbReference>
<dbReference type="Gene3D" id="1.10.10.200">
    <property type="match status" value="1"/>
</dbReference>
<dbReference type="Gene3D" id="3.30.70.980">
    <property type="match status" value="2"/>
</dbReference>
<dbReference type="HAMAP" id="MF_00693">
    <property type="entry name" value="Transcrip_reg_TACO1"/>
    <property type="match status" value="1"/>
</dbReference>
<dbReference type="InterPro" id="IPR017856">
    <property type="entry name" value="Integrase-like_N"/>
</dbReference>
<dbReference type="InterPro" id="IPR048300">
    <property type="entry name" value="TACO1_YebC-like_2nd/3rd_dom"/>
</dbReference>
<dbReference type="InterPro" id="IPR049083">
    <property type="entry name" value="TACO1_YebC_N"/>
</dbReference>
<dbReference type="InterPro" id="IPR002876">
    <property type="entry name" value="Transcrip_reg_TACO1-like"/>
</dbReference>
<dbReference type="InterPro" id="IPR026564">
    <property type="entry name" value="Transcrip_reg_TACO1-like_dom3"/>
</dbReference>
<dbReference type="InterPro" id="IPR029072">
    <property type="entry name" value="YebC-like"/>
</dbReference>
<dbReference type="NCBIfam" id="NF001030">
    <property type="entry name" value="PRK00110.1"/>
    <property type="match status" value="1"/>
</dbReference>
<dbReference type="NCBIfam" id="NF009044">
    <property type="entry name" value="PRK12378.1"/>
    <property type="match status" value="1"/>
</dbReference>
<dbReference type="NCBIfam" id="TIGR01033">
    <property type="entry name" value="YebC/PmpR family DNA-binding transcriptional regulator"/>
    <property type="match status" value="1"/>
</dbReference>
<dbReference type="PANTHER" id="PTHR12532:SF6">
    <property type="entry name" value="TRANSCRIPTIONAL REGULATORY PROTEIN YEBC-RELATED"/>
    <property type="match status" value="1"/>
</dbReference>
<dbReference type="PANTHER" id="PTHR12532">
    <property type="entry name" value="TRANSLATIONAL ACTIVATOR OF CYTOCHROME C OXIDASE 1"/>
    <property type="match status" value="1"/>
</dbReference>
<dbReference type="Pfam" id="PF20772">
    <property type="entry name" value="TACO1_YebC_N"/>
    <property type="match status" value="1"/>
</dbReference>
<dbReference type="Pfam" id="PF01709">
    <property type="entry name" value="Transcrip_reg"/>
    <property type="match status" value="1"/>
</dbReference>
<dbReference type="SUPFAM" id="SSF75625">
    <property type="entry name" value="YebC-like"/>
    <property type="match status" value="1"/>
</dbReference>
<organism>
    <name type="scientific">Photorhabdus laumondii subsp. laumondii (strain DSM 15139 / CIP 105565 / TT01)</name>
    <name type="common">Photorhabdus luminescens subsp. laumondii</name>
    <dbReference type="NCBI Taxonomy" id="243265"/>
    <lineage>
        <taxon>Bacteria</taxon>
        <taxon>Pseudomonadati</taxon>
        <taxon>Pseudomonadota</taxon>
        <taxon>Gammaproteobacteria</taxon>
        <taxon>Enterobacterales</taxon>
        <taxon>Morganellaceae</taxon>
        <taxon>Photorhabdus</taxon>
    </lineage>
</organism>
<keyword id="KW-0963">Cytoplasm</keyword>
<keyword id="KW-0238">DNA-binding</keyword>
<keyword id="KW-1185">Reference proteome</keyword>
<keyword id="KW-0804">Transcription</keyword>
<keyword id="KW-0805">Transcription regulation</keyword>
<sequence length="247" mass="26315">MAGHSKWANTKHRKAAQDAKRGKIFTKIIRELVTAARLGGGDPASNPRLRAAIDKALSNNMTRDTLNRAIARGVGSDEADNMETIIYEGYGPGGTAVMVECLSDNRNRTVSDVRHAFTKTGGNLGTDGSVAYLFAKKGVISYAPGLDEDAVMEAALEAGADDVETYDDGAIDVYTTPETFGDVKDALDAAGFVAESAEVSMIPSTKAELDAETAPKLLRLIDMLEDSDDVQEVYHNGEISDEIAALL</sequence>
<gene>
    <name type="ordered locus">plu2109</name>
</gene>
<reference key="1">
    <citation type="journal article" date="2003" name="Nat. Biotechnol.">
        <title>The genome sequence of the entomopathogenic bacterium Photorhabdus luminescens.</title>
        <authorList>
            <person name="Duchaud E."/>
            <person name="Rusniok C."/>
            <person name="Frangeul L."/>
            <person name="Buchrieser C."/>
            <person name="Givaudan A."/>
            <person name="Taourit S."/>
            <person name="Bocs S."/>
            <person name="Boursaux-Eude C."/>
            <person name="Chandler M."/>
            <person name="Charles J.-F."/>
            <person name="Dassa E."/>
            <person name="Derose R."/>
            <person name="Derzelle S."/>
            <person name="Freyssinet G."/>
            <person name="Gaudriault S."/>
            <person name="Medigue C."/>
            <person name="Lanois A."/>
            <person name="Powell K."/>
            <person name="Siguier P."/>
            <person name="Vincent R."/>
            <person name="Wingate V."/>
            <person name="Zouine M."/>
            <person name="Glaser P."/>
            <person name="Boemare N."/>
            <person name="Danchin A."/>
            <person name="Kunst F."/>
        </authorList>
    </citation>
    <scope>NUCLEOTIDE SEQUENCE [LARGE SCALE GENOMIC DNA]</scope>
    <source>
        <strain>DSM 15139 / CIP 105565 / TT01</strain>
    </source>
</reference>
<feature type="chain" id="PRO_0000175862" description="Probable transcriptional regulatory protein plu2109">
    <location>
        <begin position="1"/>
        <end position="247"/>
    </location>
</feature>
<evidence type="ECO:0000255" key="1">
    <source>
        <dbReference type="HAMAP-Rule" id="MF_00693"/>
    </source>
</evidence>